<keyword id="KW-0413">Isomerase</keyword>
<keyword id="KW-0460">Magnesium</keyword>
<keyword id="KW-0479">Metal-binding</keyword>
<keyword id="KW-1185">Reference proteome</keyword>
<gene>
    <name type="ordered locus">FB2170_14398</name>
</gene>
<sequence>MQISLKKYTLELKHTFSISRESHDFQDTLIAGLTLNGKTGYGEATSNPYYKITAESMIKEIEGIKNEIESFEFTTPESFHSFLEEKELSNFAICALDLAAHDLYGKLLGKPLYEIWGTNNDQYPTTNYTIGIAELDTMVAKMKEKPWPIYKIKLGTDNDVAIIRELRKHTTATFRIDANCAWSAEETIANAPQLKELGVEFLEQPLQADDWAGMEKVMHQCVLPVIADESCIVESDVEKCGLHFNGINIKLTKCGGLTPALRMIKKAKLMGLKVMVGCMTESSVGISAIAQLLPQLDYVDMDGAILLKRDIANGVRIGEDGSVVFPTLGGSGVTLNQ</sequence>
<name>AXEP_MARSH</name>
<evidence type="ECO:0000250" key="1"/>
<evidence type="ECO:0000269" key="2">
    <source>
    </source>
</evidence>
<evidence type="ECO:0000305" key="3"/>
<organism>
    <name type="scientific">Maribacter sp. (strain HTCC2170 / KCCM 42371)</name>
    <dbReference type="NCBI Taxonomy" id="313603"/>
    <lineage>
        <taxon>Bacteria</taxon>
        <taxon>Pseudomonadati</taxon>
        <taxon>Bacteroidota</taxon>
        <taxon>Flavobacteriia</taxon>
        <taxon>Flavobacteriales</taxon>
        <taxon>Flavobacteriaceae</taxon>
        <taxon>Maribacter</taxon>
    </lineage>
</organism>
<reference key="1">
    <citation type="journal article" date="2011" name="J. Bacteriol.">
        <title>Complete genome sequence of strain HTCC2170, a novel member of the genus Maribacter in the family Flavobacteriaceae.</title>
        <authorList>
            <person name="Oh H.M."/>
            <person name="Kang I."/>
            <person name="Yang S.J."/>
            <person name="Jang Y."/>
            <person name="Vergin K.L."/>
            <person name="Giovannoni S.J."/>
            <person name="Cho J.C."/>
        </authorList>
    </citation>
    <scope>NUCLEOTIDE SEQUENCE [LARGE SCALE GENOMIC DNA]</scope>
    <source>
        <strain>HTCC2170 / KCCM 42371</strain>
    </source>
</reference>
<reference key="2">
    <citation type="journal article" date="2012" name="Proc. Natl. Acad. Sci. U.S.A.">
        <title>Homology models guide discovery of diverse enzyme specificities among dipeptide epimerases in the enolase superfamily.</title>
        <authorList>
            <person name="Lukk T."/>
            <person name="Sakai A."/>
            <person name="Kalyanaraman C."/>
            <person name="Brown S.D."/>
            <person name="Imker H.J."/>
            <person name="Song L."/>
            <person name="Fedorov A.A."/>
            <person name="Fedorov E.V."/>
            <person name="Toro R."/>
            <person name="Hillerich B."/>
            <person name="Seidel R."/>
            <person name="Patskovsky Y."/>
            <person name="Vetting M.W."/>
            <person name="Nair S.K."/>
            <person name="Babbitt P.C."/>
            <person name="Almo S.C."/>
            <person name="Gerlt J.A."/>
            <person name="Jacobson M.P."/>
        </authorList>
    </citation>
    <scope>FUNCTION</scope>
    <scope>COFACTOR</scope>
</reference>
<proteinExistence type="inferred from homology"/>
<comment type="function">
    <text evidence="2">Broad specificity dipeptide epimerase. Catalyzes the epimerization of L-Ala-L-Ala, L-Ala-L-Glu, L-Ala-L-Ser, L-Ala-L-Thr and L-Ala-L-Met (in vitro).</text>
</comment>
<comment type="cofactor">
    <cofactor evidence="2">
        <name>Mg(2+)</name>
        <dbReference type="ChEBI" id="CHEBI:18420"/>
    </cofactor>
    <text evidence="2">Binds 1 Mg(2+) ion per subunit.</text>
</comment>
<comment type="miscellaneous">
    <text>Part of a large, functionally divergent protein family. Protein modeling and substrate docking were used to predict the substrate specificity, prior to biochemical analysis.</text>
</comment>
<comment type="similarity">
    <text evidence="3">Belongs to the mandelate racemase/muconate lactonizing enzyme family.</text>
</comment>
<dbReference type="EC" id="5.1.1.-"/>
<dbReference type="EMBL" id="CP002157">
    <property type="protein sequence ID" value="EAR01726.1"/>
    <property type="molecule type" value="Genomic_DNA"/>
</dbReference>
<dbReference type="RefSeq" id="WP_013307499.1">
    <property type="nucleotide sequence ID" value="NC_014472.1"/>
</dbReference>
<dbReference type="SMR" id="A4AQI7"/>
<dbReference type="STRING" id="313603.FB2170_14398"/>
<dbReference type="KEGG" id="fbc:FB2170_14398"/>
<dbReference type="eggNOG" id="COG4948">
    <property type="taxonomic scope" value="Bacteria"/>
</dbReference>
<dbReference type="HOGENOM" id="CLU_030273_4_3_10"/>
<dbReference type="OrthoDB" id="9775391at2"/>
<dbReference type="Proteomes" id="UP000001602">
    <property type="component" value="Chromosome"/>
</dbReference>
<dbReference type="GO" id="GO:0000287">
    <property type="term" value="F:magnesium ion binding"/>
    <property type="evidence" value="ECO:0000314"/>
    <property type="project" value="UniProtKB"/>
</dbReference>
<dbReference type="GO" id="GO:0016854">
    <property type="term" value="F:racemase and epimerase activity"/>
    <property type="evidence" value="ECO:0000314"/>
    <property type="project" value="UniProtKB"/>
</dbReference>
<dbReference type="GO" id="GO:0016855">
    <property type="term" value="F:racemase and epimerase activity, acting on amino acids and derivatives"/>
    <property type="evidence" value="ECO:0007669"/>
    <property type="project" value="InterPro"/>
</dbReference>
<dbReference type="GO" id="GO:0006518">
    <property type="term" value="P:peptide metabolic process"/>
    <property type="evidence" value="ECO:0000314"/>
    <property type="project" value="UniProtKB"/>
</dbReference>
<dbReference type="CDD" id="cd03319">
    <property type="entry name" value="L-Ala-DL-Glu_epimerase"/>
    <property type="match status" value="1"/>
</dbReference>
<dbReference type="Gene3D" id="3.20.20.120">
    <property type="entry name" value="Enolase-like C-terminal domain"/>
    <property type="match status" value="1"/>
</dbReference>
<dbReference type="Gene3D" id="3.30.390.10">
    <property type="entry name" value="Enolase-like, N-terminal domain"/>
    <property type="match status" value="1"/>
</dbReference>
<dbReference type="InterPro" id="IPR034593">
    <property type="entry name" value="DgoD-like"/>
</dbReference>
<dbReference type="InterPro" id="IPR034603">
    <property type="entry name" value="Dipeptide_epimerase"/>
</dbReference>
<dbReference type="InterPro" id="IPR036849">
    <property type="entry name" value="Enolase-like_C_sf"/>
</dbReference>
<dbReference type="InterPro" id="IPR029017">
    <property type="entry name" value="Enolase-like_N"/>
</dbReference>
<dbReference type="InterPro" id="IPR029065">
    <property type="entry name" value="Enolase_C-like"/>
</dbReference>
<dbReference type="InterPro" id="IPR013342">
    <property type="entry name" value="Mandelate_racemase_C"/>
</dbReference>
<dbReference type="PANTHER" id="PTHR48080">
    <property type="entry name" value="D-GALACTONATE DEHYDRATASE-RELATED"/>
    <property type="match status" value="1"/>
</dbReference>
<dbReference type="PANTHER" id="PTHR48080:SF3">
    <property type="entry name" value="ENOLASE SUPERFAMILY MEMBER DDB_G0284701"/>
    <property type="match status" value="1"/>
</dbReference>
<dbReference type="Pfam" id="PF13378">
    <property type="entry name" value="MR_MLE_C"/>
    <property type="match status" value="1"/>
</dbReference>
<dbReference type="SFLD" id="SFLDS00001">
    <property type="entry name" value="Enolase"/>
    <property type="match status" value="1"/>
</dbReference>
<dbReference type="SFLD" id="SFLDG00180">
    <property type="entry name" value="muconate_cycloisomerase"/>
    <property type="match status" value="1"/>
</dbReference>
<dbReference type="SMART" id="SM00922">
    <property type="entry name" value="MR_MLE"/>
    <property type="match status" value="1"/>
</dbReference>
<dbReference type="SUPFAM" id="SSF51604">
    <property type="entry name" value="Enolase C-terminal domain-like"/>
    <property type="match status" value="1"/>
</dbReference>
<dbReference type="SUPFAM" id="SSF54826">
    <property type="entry name" value="Enolase N-terminal domain-like"/>
    <property type="match status" value="1"/>
</dbReference>
<accession>A4AQI7</accession>
<feature type="chain" id="PRO_0000429652" description="L-Ala-D/L-amino acid epimerase">
    <location>
        <begin position="1"/>
        <end position="337"/>
    </location>
</feature>
<feature type="binding site" evidence="1">
    <location>
        <position position="129"/>
    </location>
    <ligand>
        <name>substrate</name>
    </ligand>
</feature>
<feature type="binding site" evidence="1">
    <location>
        <begin position="151"/>
        <end position="153"/>
    </location>
    <ligand>
        <name>substrate</name>
    </ligand>
</feature>
<feature type="binding site" evidence="1">
    <location>
        <position position="177"/>
    </location>
    <ligand>
        <name>Mg(2+)</name>
        <dbReference type="ChEBI" id="CHEBI:18420"/>
    </ligand>
</feature>
<feature type="binding site" evidence="1">
    <location>
        <position position="203"/>
    </location>
    <ligand>
        <name>Mg(2+)</name>
        <dbReference type="ChEBI" id="CHEBI:18420"/>
    </ligand>
</feature>
<feature type="binding site" evidence="1">
    <location>
        <position position="228"/>
    </location>
    <ligand>
        <name>Mg(2+)</name>
        <dbReference type="ChEBI" id="CHEBI:18420"/>
    </ligand>
</feature>
<feature type="binding site" evidence="1">
    <location>
        <position position="250"/>
    </location>
    <ligand>
        <name>substrate</name>
    </ligand>
</feature>
<feature type="binding site" evidence="1">
    <location>
        <begin position="300"/>
        <end position="302"/>
    </location>
    <ligand>
        <name>substrate</name>
    </ligand>
</feature>
<protein>
    <recommendedName>
        <fullName>L-Ala-D/L-amino acid epimerase</fullName>
        <ecNumber>5.1.1.-</ecNumber>
    </recommendedName>
</protein>